<organism>
    <name type="scientific">Trypanosoma cruzi (strain CL Brener)</name>
    <dbReference type="NCBI Taxonomy" id="353153"/>
    <lineage>
        <taxon>Eukaryota</taxon>
        <taxon>Discoba</taxon>
        <taxon>Euglenozoa</taxon>
        <taxon>Kinetoplastea</taxon>
        <taxon>Metakinetoplastina</taxon>
        <taxon>Trypanosomatida</taxon>
        <taxon>Trypanosomatidae</taxon>
        <taxon>Trypanosoma</taxon>
        <taxon>Schizotrypanum</taxon>
    </lineage>
</organism>
<name>DRE21_TRYCC</name>
<reference key="1">
    <citation type="journal article" date="2005" name="Science">
        <title>The genome sequence of Trypanosoma cruzi, etiologic agent of Chagas disease.</title>
        <authorList>
            <person name="El-Sayed N.M.A."/>
            <person name="Myler P.J."/>
            <person name="Bartholomeu D.C."/>
            <person name="Nilsson D."/>
            <person name="Aggarwal G."/>
            <person name="Tran A.-N."/>
            <person name="Ghedin E."/>
            <person name="Worthey E.A."/>
            <person name="Delcher A.L."/>
            <person name="Blandin G."/>
            <person name="Westenberger S.J."/>
            <person name="Caler E."/>
            <person name="Cerqueira G.C."/>
            <person name="Branche C."/>
            <person name="Haas B."/>
            <person name="Anupama A."/>
            <person name="Arner E."/>
            <person name="Aslund L."/>
            <person name="Attipoe P."/>
            <person name="Bontempi E."/>
            <person name="Bringaud F."/>
            <person name="Burton P."/>
            <person name="Cadag E."/>
            <person name="Campbell D.A."/>
            <person name="Carrington M."/>
            <person name="Crabtree J."/>
            <person name="Darban H."/>
            <person name="da Silveira J.F."/>
            <person name="de Jong P."/>
            <person name="Edwards K."/>
            <person name="Englund P.T."/>
            <person name="Fazelina G."/>
            <person name="Feldblyum T."/>
            <person name="Ferella M."/>
            <person name="Frasch A.C."/>
            <person name="Gull K."/>
            <person name="Horn D."/>
            <person name="Hou L."/>
            <person name="Huang Y."/>
            <person name="Kindlund E."/>
            <person name="Klingbeil M."/>
            <person name="Kluge S."/>
            <person name="Koo H."/>
            <person name="Lacerda D."/>
            <person name="Levin M.J."/>
            <person name="Lorenzi H."/>
            <person name="Louie T."/>
            <person name="Machado C.R."/>
            <person name="McCulloch R."/>
            <person name="McKenna A."/>
            <person name="Mizuno Y."/>
            <person name="Mottram J.C."/>
            <person name="Nelson S."/>
            <person name="Ochaya S."/>
            <person name="Osoegawa K."/>
            <person name="Pai G."/>
            <person name="Parsons M."/>
            <person name="Pentony M."/>
            <person name="Pettersson U."/>
            <person name="Pop M."/>
            <person name="Ramirez J.L."/>
            <person name="Rinta J."/>
            <person name="Robertson L."/>
            <person name="Salzberg S.L."/>
            <person name="Sanchez D.O."/>
            <person name="Seyler A."/>
            <person name="Sharma R."/>
            <person name="Shetty J."/>
            <person name="Simpson A.J."/>
            <person name="Sisk E."/>
            <person name="Tammi M.T."/>
            <person name="Tarleton R."/>
            <person name="Teixeira S."/>
            <person name="Van Aken S."/>
            <person name="Vogt C."/>
            <person name="Ward P.N."/>
            <person name="Wickstead B."/>
            <person name="Wortman J."/>
            <person name="White O."/>
            <person name="Fraser C.M."/>
            <person name="Stuart K.D."/>
            <person name="Andersson B."/>
        </authorList>
    </citation>
    <scope>NUCLEOTIDE SEQUENCE [LARGE SCALE GENOMIC DNA]</scope>
    <source>
        <strain>CL Brener</strain>
    </source>
</reference>
<feature type="chain" id="PRO_0000392368" description="Anamorsin homolog 1">
    <location>
        <begin position="1"/>
        <end position="115"/>
    </location>
</feature>
<feature type="region of interest" description="Disordered" evidence="1">
    <location>
        <begin position="30"/>
        <end position="115"/>
    </location>
</feature>
<feature type="region of interest" description="Fe-S binding site A" evidence="1">
    <location>
        <begin position="39"/>
        <end position="51"/>
    </location>
</feature>
<feature type="region of interest" description="Fe-S binding site B" evidence="1">
    <location>
        <begin position="77"/>
        <end position="91"/>
    </location>
</feature>
<feature type="short sequence motif" description="Cx2C motif 1" evidence="1">
    <location>
        <begin position="77"/>
        <end position="80"/>
    </location>
</feature>
<feature type="short sequence motif" description="Cx2C motif 2" evidence="1">
    <location>
        <begin position="88"/>
        <end position="91"/>
    </location>
</feature>
<feature type="binding site" evidence="1">
    <location>
        <position position="39"/>
    </location>
    <ligand>
        <name>[2Fe-2S] cluster</name>
        <dbReference type="ChEBI" id="CHEBI:190135"/>
    </ligand>
</feature>
<feature type="binding site" evidence="1">
    <location>
        <position position="46"/>
    </location>
    <ligand>
        <name>[2Fe-2S] cluster</name>
        <dbReference type="ChEBI" id="CHEBI:190135"/>
    </ligand>
</feature>
<feature type="binding site" evidence="1">
    <location>
        <position position="49"/>
    </location>
    <ligand>
        <name>[2Fe-2S] cluster</name>
        <dbReference type="ChEBI" id="CHEBI:190135"/>
    </ligand>
</feature>
<feature type="binding site" evidence="1">
    <location>
        <position position="51"/>
    </location>
    <ligand>
        <name>[2Fe-2S] cluster</name>
        <dbReference type="ChEBI" id="CHEBI:190135"/>
    </ligand>
</feature>
<feature type="binding site" evidence="1">
    <location>
        <position position="77"/>
    </location>
    <ligand>
        <name>[4Fe-4S] cluster</name>
        <dbReference type="ChEBI" id="CHEBI:49883"/>
    </ligand>
</feature>
<feature type="binding site" evidence="1">
    <location>
        <position position="80"/>
    </location>
    <ligand>
        <name>[4Fe-4S] cluster</name>
        <dbReference type="ChEBI" id="CHEBI:49883"/>
    </ligand>
</feature>
<feature type="binding site" evidence="1">
    <location>
        <position position="88"/>
    </location>
    <ligand>
        <name>[4Fe-4S] cluster</name>
        <dbReference type="ChEBI" id="CHEBI:49883"/>
    </ligand>
</feature>
<feature type="binding site" evidence="1">
    <location>
        <position position="91"/>
    </location>
    <ligand>
        <name>[4Fe-4S] cluster</name>
        <dbReference type="ChEBI" id="CHEBI:49883"/>
    </ligand>
</feature>
<sequence length="115" mass="12485">MSSTTTQAFSLKTRQAVDEDALLTEEDRVVKEATKGEDCTTRRRACKNCTCGRAELERKMLAEGKKVEMPQMPAGGCGNCAKGDAFRCATCPFLGQPAFDNTSDGKVKLNLTDDI</sequence>
<comment type="function">
    <text evidence="1">Component of the cytosolic iron-sulfur (Fe-S) protein assembly (CIA) machinery. Required for the maturation of extramitochondrial Fe-S proteins. Part of an electron transfer chain functioning in an early step of cytosolic Fe-S biogenesis, facilitating the de novo assembly of a [4Fe-4S] cluster on the cytosolic Fe-S scaffold complex. Electrons are transferred from NADPH via a FAD- and FMN-containing diflavin oxidoreductase. Together with the diflavin oxidoreductase, also required for the assembly of the diferric tyrosyl radical cofactor of ribonucleotide reductase (RNR), probably by providing electrons for reduction during radical cofactor maturation in the catalytic small subunit.</text>
</comment>
<comment type="cofactor">
    <cofactor evidence="1">
        <name>[2Fe-2S] cluster</name>
        <dbReference type="ChEBI" id="CHEBI:190135"/>
    </cofactor>
</comment>
<comment type="cofactor">
    <cofactor evidence="1">
        <name>[4Fe-4S] cluster</name>
        <dbReference type="ChEBI" id="CHEBI:49883"/>
    </cofactor>
</comment>
<comment type="subunit">
    <text evidence="2">Monomer.</text>
</comment>
<comment type="subcellular location">
    <subcellularLocation>
        <location evidence="1">Cytoplasm</location>
    </subcellularLocation>
    <subcellularLocation>
        <location evidence="1">Mitochondrion intermembrane space</location>
    </subcellularLocation>
</comment>
<comment type="domain">
    <text evidence="1">The C-terminal domain binds 2 Fe-S clusters but is otherwise mostly in an intrinsically disordered conformation.</text>
</comment>
<comment type="domain">
    <text evidence="1">The N-terminal domain has structural similarity with S-adenosyl-L-methionine-dependent methyltransferases, but does not bind S-adenosyl-L-methionine. It is required for correct assembly of the 2 Fe-S clusters.</text>
</comment>
<comment type="domain">
    <text evidence="1">The twin Cx2C motifs are involved in the recognition by the mitochondrial MIA40-ERV1 disulfide relay system. The formation of 2 disulfide bonds in the Cx2C motifs through dithiol/disulfide exchange reactions effectively traps the protein in the mitochondrial intermembrane space.</text>
</comment>
<comment type="similarity">
    <text evidence="3">Belongs to the anamorsin family.</text>
</comment>
<proteinExistence type="inferred from homology"/>
<keyword id="KW-0001">2Fe-2S</keyword>
<keyword id="KW-0004">4Fe-4S</keyword>
<keyword id="KW-0963">Cytoplasm</keyword>
<keyword id="KW-0408">Iron</keyword>
<keyword id="KW-0411">Iron-sulfur</keyword>
<keyword id="KW-0479">Metal-binding</keyword>
<keyword id="KW-0496">Mitochondrion</keyword>
<keyword id="KW-1185">Reference proteome</keyword>
<accession>Q4D3B7</accession>
<evidence type="ECO:0000250" key="1">
    <source>
        <dbReference type="UniProtKB" id="P36152"/>
    </source>
</evidence>
<evidence type="ECO:0000250" key="2">
    <source>
        <dbReference type="UniProtKB" id="Q6FI81"/>
    </source>
</evidence>
<evidence type="ECO:0000305" key="3"/>
<gene>
    <name type="ORF">Tc00.1047053511393.79</name>
</gene>
<protein>
    <recommendedName>
        <fullName>Anamorsin homolog 1</fullName>
    </recommendedName>
    <alternativeName>
        <fullName>Fe-S cluster assembly protein DRE2 homolog 1</fullName>
    </alternativeName>
</protein>
<dbReference type="EMBL" id="AAHK01001100">
    <property type="protein sequence ID" value="EAN87024.1"/>
    <property type="molecule type" value="Genomic_DNA"/>
</dbReference>
<dbReference type="RefSeq" id="XP_808875.1">
    <property type="nucleotide sequence ID" value="XM_803782.1"/>
</dbReference>
<dbReference type="STRING" id="353153.Q4D3B7"/>
<dbReference type="PaxDb" id="353153-Q4D3B7"/>
<dbReference type="EnsemblProtists" id="EAN87024">
    <property type="protein sequence ID" value="EAN87024"/>
    <property type="gene ID" value="Tc00.1047053511393.79"/>
</dbReference>
<dbReference type="GeneID" id="3539402"/>
<dbReference type="KEGG" id="tcr:511393.79"/>
<dbReference type="eggNOG" id="KOG4020">
    <property type="taxonomic scope" value="Eukaryota"/>
</dbReference>
<dbReference type="InParanoid" id="Q4D3B7"/>
<dbReference type="OMA" id="TMPPGGC"/>
<dbReference type="Proteomes" id="UP000002296">
    <property type="component" value="Unassembled WGS sequence"/>
</dbReference>
<dbReference type="GO" id="GO:0005758">
    <property type="term" value="C:mitochondrial intermembrane space"/>
    <property type="evidence" value="ECO:0007669"/>
    <property type="project" value="UniProtKB-SubCell"/>
</dbReference>
<dbReference type="GO" id="GO:0051537">
    <property type="term" value="F:2 iron, 2 sulfur cluster binding"/>
    <property type="evidence" value="ECO:0007669"/>
    <property type="project" value="UniProtKB-KW"/>
</dbReference>
<dbReference type="GO" id="GO:0051539">
    <property type="term" value="F:4 iron, 4 sulfur cluster binding"/>
    <property type="evidence" value="ECO:0007669"/>
    <property type="project" value="UniProtKB-KW"/>
</dbReference>
<dbReference type="GO" id="GO:0046872">
    <property type="term" value="F:metal ion binding"/>
    <property type="evidence" value="ECO:0007669"/>
    <property type="project" value="UniProtKB-KW"/>
</dbReference>
<dbReference type="GO" id="GO:0016226">
    <property type="term" value="P:iron-sulfur cluster assembly"/>
    <property type="evidence" value="ECO:0007669"/>
    <property type="project" value="InterPro"/>
</dbReference>
<dbReference type="InterPro" id="IPR007785">
    <property type="entry name" value="Anamorsin"/>
</dbReference>
<dbReference type="InterPro" id="IPR046408">
    <property type="entry name" value="CIAPIN1"/>
</dbReference>
<dbReference type="PANTHER" id="PTHR13273">
    <property type="entry name" value="ANAMORSIN"/>
    <property type="match status" value="1"/>
</dbReference>
<dbReference type="PANTHER" id="PTHR13273:SF14">
    <property type="entry name" value="ANAMORSIN"/>
    <property type="match status" value="1"/>
</dbReference>
<dbReference type="Pfam" id="PF05093">
    <property type="entry name" value="CIAPIN1"/>
    <property type="match status" value="1"/>
</dbReference>